<proteinExistence type="inferred from homology"/>
<dbReference type="EMBL" id="AP009247">
    <property type="protein sequence ID" value="BAF61307.1"/>
    <property type="molecule type" value="Genomic_DNA"/>
</dbReference>
<dbReference type="RefSeq" id="WP_011929577.1">
    <property type="nucleotide sequence ID" value="NC_009465.1"/>
</dbReference>
<dbReference type="SMR" id="A5CXL2"/>
<dbReference type="STRING" id="412965.COSY_0177"/>
<dbReference type="KEGG" id="vok:COSY_0177"/>
<dbReference type="eggNOG" id="COG0255">
    <property type="taxonomic scope" value="Bacteria"/>
</dbReference>
<dbReference type="HOGENOM" id="CLU_158491_5_2_6"/>
<dbReference type="OrthoDB" id="9815192at2"/>
<dbReference type="Proteomes" id="UP000000247">
    <property type="component" value="Chromosome"/>
</dbReference>
<dbReference type="GO" id="GO:1990904">
    <property type="term" value="C:ribonucleoprotein complex"/>
    <property type="evidence" value="ECO:0007669"/>
    <property type="project" value="UniProtKB-KW"/>
</dbReference>
<dbReference type="GO" id="GO:0005840">
    <property type="term" value="C:ribosome"/>
    <property type="evidence" value="ECO:0007669"/>
    <property type="project" value="UniProtKB-KW"/>
</dbReference>
<dbReference type="GO" id="GO:0003735">
    <property type="term" value="F:structural constituent of ribosome"/>
    <property type="evidence" value="ECO:0007669"/>
    <property type="project" value="InterPro"/>
</dbReference>
<dbReference type="GO" id="GO:0006412">
    <property type="term" value="P:translation"/>
    <property type="evidence" value="ECO:0007669"/>
    <property type="project" value="UniProtKB-UniRule"/>
</dbReference>
<dbReference type="CDD" id="cd00427">
    <property type="entry name" value="Ribosomal_L29_HIP"/>
    <property type="match status" value="1"/>
</dbReference>
<dbReference type="Gene3D" id="1.10.287.310">
    <property type="match status" value="1"/>
</dbReference>
<dbReference type="HAMAP" id="MF_00374">
    <property type="entry name" value="Ribosomal_uL29"/>
    <property type="match status" value="1"/>
</dbReference>
<dbReference type="InterPro" id="IPR001854">
    <property type="entry name" value="Ribosomal_uL29"/>
</dbReference>
<dbReference type="InterPro" id="IPR036049">
    <property type="entry name" value="Ribosomal_uL29_sf"/>
</dbReference>
<dbReference type="NCBIfam" id="TIGR00012">
    <property type="entry name" value="L29"/>
    <property type="match status" value="1"/>
</dbReference>
<dbReference type="Pfam" id="PF00831">
    <property type="entry name" value="Ribosomal_L29"/>
    <property type="match status" value="1"/>
</dbReference>
<dbReference type="SUPFAM" id="SSF46561">
    <property type="entry name" value="Ribosomal protein L29 (L29p)"/>
    <property type="match status" value="1"/>
</dbReference>
<evidence type="ECO:0000255" key="1">
    <source>
        <dbReference type="HAMAP-Rule" id="MF_00374"/>
    </source>
</evidence>
<evidence type="ECO:0000305" key="2"/>
<reference key="1">
    <citation type="journal article" date="2007" name="Curr. Biol.">
        <title>Reduced genome of the thioautotrophic intracellular symbiont in a deep-sea clam, Calyptogena okutanii.</title>
        <authorList>
            <person name="Kuwahara H."/>
            <person name="Yoshida T."/>
            <person name="Takaki Y."/>
            <person name="Shimamura S."/>
            <person name="Nishi S."/>
            <person name="Harada M."/>
            <person name="Matsuyama K."/>
            <person name="Takishita K."/>
            <person name="Kawato M."/>
            <person name="Uematsu K."/>
            <person name="Fujiwara Y."/>
            <person name="Sato T."/>
            <person name="Kato C."/>
            <person name="Kitagawa M."/>
            <person name="Kato I."/>
            <person name="Maruyama T."/>
        </authorList>
    </citation>
    <scope>NUCLEOTIDE SEQUENCE [LARGE SCALE GENOMIC DNA]</scope>
    <source>
        <strain>HA</strain>
    </source>
</reference>
<name>RL29_VESOH</name>
<organism>
    <name type="scientific">Vesicomyosocius okutanii subsp. Calyptogena okutanii (strain HA)</name>
    <dbReference type="NCBI Taxonomy" id="412965"/>
    <lineage>
        <taxon>Bacteria</taxon>
        <taxon>Pseudomonadati</taxon>
        <taxon>Pseudomonadota</taxon>
        <taxon>Gammaproteobacteria</taxon>
        <taxon>Candidatus Pseudothioglobaceae</taxon>
        <taxon>Candidatus Vesicomyosocius</taxon>
    </lineage>
</organism>
<keyword id="KW-1185">Reference proteome</keyword>
<keyword id="KW-0687">Ribonucleoprotein</keyword>
<keyword id="KW-0689">Ribosomal protein</keyword>
<gene>
    <name evidence="1" type="primary">rpmC</name>
    <name type="ordered locus">COSY_0177</name>
</gene>
<protein>
    <recommendedName>
        <fullName evidence="1">Large ribosomal subunit protein uL29</fullName>
    </recommendedName>
    <alternativeName>
        <fullName evidence="2">50S ribosomal protein L29</fullName>
    </alternativeName>
</protein>
<comment type="similarity">
    <text evidence="1">Belongs to the universal ribosomal protein uL29 family.</text>
</comment>
<sequence>MDVKELRNQSVSALNEMLIKLLKEHFEFRMQHKSSQLDNFSKLGKTKKSIAQIKTIIRQKQA</sequence>
<accession>A5CXL2</accession>
<feature type="chain" id="PRO_1000007651" description="Large ribosomal subunit protein uL29">
    <location>
        <begin position="1"/>
        <end position="62"/>
    </location>
</feature>